<protein>
    <recommendedName>
        <fullName evidence="1">NADH-quinone oxidoreductase subunit K</fullName>
        <ecNumber evidence="1">7.1.1.-</ecNumber>
    </recommendedName>
    <alternativeName>
        <fullName evidence="1">NADH dehydrogenase I subunit K</fullName>
    </alternativeName>
    <alternativeName>
        <fullName evidence="1">NDH-1 subunit K</fullName>
    </alternativeName>
</protein>
<reference key="1">
    <citation type="journal article" date="2009" name="PLoS Genet.">
        <title>The complete genome and proteome of Laribacter hongkongensis reveal potential mechanisms for adaptations to different temperatures and habitats.</title>
        <authorList>
            <person name="Woo P.C.Y."/>
            <person name="Lau S.K.P."/>
            <person name="Tse H."/>
            <person name="Teng J.L.L."/>
            <person name="Curreem S.O."/>
            <person name="Tsang A.K.L."/>
            <person name="Fan R.Y.Y."/>
            <person name="Wong G.K.M."/>
            <person name="Huang Y."/>
            <person name="Loman N.J."/>
            <person name="Snyder L.A.S."/>
            <person name="Cai J.J."/>
            <person name="Huang J.-D."/>
            <person name="Mak W."/>
            <person name="Pallen M.J."/>
            <person name="Lok S."/>
            <person name="Yuen K.-Y."/>
        </authorList>
    </citation>
    <scope>NUCLEOTIDE SEQUENCE [LARGE SCALE GENOMIC DNA]</scope>
    <source>
        <strain>HLHK9</strain>
    </source>
</reference>
<organism>
    <name type="scientific">Laribacter hongkongensis (strain HLHK9)</name>
    <dbReference type="NCBI Taxonomy" id="557598"/>
    <lineage>
        <taxon>Bacteria</taxon>
        <taxon>Pseudomonadati</taxon>
        <taxon>Pseudomonadota</taxon>
        <taxon>Betaproteobacteria</taxon>
        <taxon>Neisseriales</taxon>
        <taxon>Aquaspirillaceae</taxon>
        <taxon>Laribacter</taxon>
    </lineage>
</organism>
<gene>
    <name evidence="1" type="primary">nuoK</name>
    <name type="ordered locus">LHK_00537</name>
</gene>
<dbReference type="EC" id="7.1.1.-" evidence="1"/>
<dbReference type="EMBL" id="CP001154">
    <property type="protein sequence ID" value="ACO73530.1"/>
    <property type="molecule type" value="Genomic_DNA"/>
</dbReference>
<dbReference type="RefSeq" id="WP_012696022.1">
    <property type="nucleotide sequence ID" value="NC_012559.1"/>
</dbReference>
<dbReference type="SMR" id="C1DCB3"/>
<dbReference type="STRING" id="557598.LHK_00537"/>
<dbReference type="GeneID" id="75109311"/>
<dbReference type="KEGG" id="lhk:LHK_00537"/>
<dbReference type="eggNOG" id="COG0713">
    <property type="taxonomic scope" value="Bacteria"/>
</dbReference>
<dbReference type="HOGENOM" id="CLU_144724_2_0_4"/>
<dbReference type="Proteomes" id="UP000002010">
    <property type="component" value="Chromosome"/>
</dbReference>
<dbReference type="GO" id="GO:0030964">
    <property type="term" value="C:NADH dehydrogenase complex"/>
    <property type="evidence" value="ECO:0007669"/>
    <property type="project" value="TreeGrafter"/>
</dbReference>
<dbReference type="GO" id="GO:0005886">
    <property type="term" value="C:plasma membrane"/>
    <property type="evidence" value="ECO:0007669"/>
    <property type="project" value="UniProtKB-SubCell"/>
</dbReference>
<dbReference type="GO" id="GO:0050136">
    <property type="term" value="F:NADH:ubiquinone reductase (non-electrogenic) activity"/>
    <property type="evidence" value="ECO:0007669"/>
    <property type="project" value="UniProtKB-UniRule"/>
</dbReference>
<dbReference type="GO" id="GO:0048038">
    <property type="term" value="F:quinone binding"/>
    <property type="evidence" value="ECO:0007669"/>
    <property type="project" value="UniProtKB-KW"/>
</dbReference>
<dbReference type="GO" id="GO:0042773">
    <property type="term" value="P:ATP synthesis coupled electron transport"/>
    <property type="evidence" value="ECO:0007669"/>
    <property type="project" value="InterPro"/>
</dbReference>
<dbReference type="FunFam" id="1.10.287.3510:FF:000001">
    <property type="entry name" value="NADH-quinone oxidoreductase subunit K"/>
    <property type="match status" value="1"/>
</dbReference>
<dbReference type="Gene3D" id="1.10.287.3510">
    <property type="match status" value="1"/>
</dbReference>
<dbReference type="HAMAP" id="MF_01456">
    <property type="entry name" value="NDH1_NuoK"/>
    <property type="match status" value="1"/>
</dbReference>
<dbReference type="InterPro" id="IPR001133">
    <property type="entry name" value="NADH_UbQ_OxRdtase_chain4L/K"/>
</dbReference>
<dbReference type="InterPro" id="IPR039428">
    <property type="entry name" value="NUOK/Mnh_C1-like"/>
</dbReference>
<dbReference type="NCBIfam" id="NF004320">
    <property type="entry name" value="PRK05715.1-2"/>
    <property type="match status" value="1"/>
</dbReference>
<dbReference type="NCBIfam" id="NF004321">
    <property type="entry name" value="PRK05715.1-3"/>
    <property type="match status" value="1"/>
</dbReference>
<dbReference type="NCBIfam" id="NF004323">
    <property type="entry name" value="PRK05715.1-5"/>
    <property type="match status" value="1"/>
</dbReference>
<dbReference type="PANTHER" id="PTHR11434:SF21">
    <property type="entry name" value="NADH DEHYDROGENASE SUBUNIT 4L-RELATED"/>
    <property type="match status" value="1"/>
</dbReference>
<dbReference type="PANTHER" id="PTHR11434">
    <property type="entry name" value="NADH-UBIQUINONE OXIDOREDUCTASE SUBUNIT ND4L"/>
    <property type="match status" value="1"/>
</dbReference>
<dbReference type="Pfam" id="PF00420">
    <property type="entry name" value="Oxidored_q2"/>
    <property type="match status" value="1"/>
</dbReference>
<sequence length="101" mass="11004">MLTLTHYLVLAAVMFAISVLGIFLNRKNVIVLLMAIELMLLAVNFNFIAFAHYFGDTAGQIFVFFVLTVAAAESAIGLAILVVLFRNLATINVEDLGQLKG</sequence>
<proteinExistence type="inferred from homology"/>
<comment type="function">
    <text evidence="1">NDH-1 shuttles electrons from NADH, via FMN and iron-sulfur (Fe-S) centers, to quinones in the respiratory chain. The immediate electron acceptor for the enzyme in this species is believed to be ubiquinone. Couples the redox reaction to proton translocation (for every two electrons transferred, four hydrogen ions are translocated across the cytoplasmic membrane), and thus conserves the redox energy in a proton gradient.</text>
</comment>
<comment type="catalytic activity">
    <reaction evidence="1">
        <text>a quinone + NADH + 5 H(+)(in) = a quinol + NAD(+) + 4 H(+)(out)</text>
        <dbReference type="Rhea" id="RHEA:57888"/>
        <dbReference type="ChEBI" id="CHEBI:15378"/>
        <dbReference type="ChEBI" id="CHEBI:24646"/>
        <dbReference type="ChEBI" id="CHEBI:57540"/>
        <dbReference type="ChEBI" id="CHEBI:57945"/>
        <dbReference type="ChEBI" id="CHEBI:132124"/>
    </reaction>
</comment>
<comment type="subunit">
    <text evidence="1">NDH-1 is composed of 14 different subunits. Subunits NuoA, H, J, K, L, M, N constitute the membrane sector of the complex.</text>
</comment>
<comment type="subcellular location">
    <subcellularLocation>
        <location evidence="1">Cell inner membrane</location>
        <topology evidence="1">Multi-pass membrane protein</topology>
    </subcellularLocation>
</comment>
<comment type="similarity">
    <text evidence="1">Belongs to the complex I subunit 4L family.</text>
</comment>
<keyword id="KW-0997">Cell inner membrane</keyword>
<keyword id="KW-1003">Cell membrane</keyword>
<keyword id="KW-0472">Membrane</keyword>
<keyword id="KW-0520">NAD</keyword>
<keyword id="KW-0874">Quinone</keyword>
<keyword id="KW-1185">Reference proteome</keyword>
<keyword id="KW-1278">Translocase</keyword>
<keyword id="KW-0812">Transmembrane</keyword>
<keyword id="KW-1133">Transmembrane helix</keyword>
<keyword id="KW-0813">Transport</keyword>
<keyword id="KW-0830">Ubiquinone</keyword>
<feature type="chain" id="PRO_0000390102" description="NADH-quinone oxidoreductase subunit K">
    <location>
        <begin position="1"/>
        <end position="101"/>
    </location>
</feature>
<feature type="transmembrane region" description="Helical" evidence="1">
    <location>
        <begin position="4"/>
        <end position="24"/>
    </location>
</feature>
<feature type="transmembrane region" description="Helical" evidence="1">
    <location>
        <begin position="30"/>
        <end position="50"/>
    </location>
</feature>
<feature type="transmembrane region" description="Helical" evidence="1">
    <location>
        <begin position="61"/>
        <end position="81"/>
    </location>
</feature>
<name>NUOK_LARHH</name>
<accession>C1DCB3</accession>
<evidence type="ECO:0000255" key="1">
    <source>
        <dbReference type="HAMAP-Rule" id="MF_01456"/>
    </source>
</evidence>